<protein>
    <recommendedName>
        <fullName evidence="1">Large ribosomal subunit protein bL20</fullName>
    </recommendedName>
    <alternativeName>
        <fullName evidence="2">50S ribosomal protein L20</fullName>
    </alternativeName>
</protein>
<accession>A6VPA9</accession>
<evidence type="ECO:0000255" key="1">
    <source>
        <dbReference type="HAMAP-Rule" id="MF_00382"/>
    </source>
</evidence>
<evidence type="ECO:0000305" key="2"/>
<dbReference type="EMBL" id="CP000746">
    <property type="protein sequence ID" value="ABR74806.1"/>
    <property type="molecule type" value="Genomic_DNA"/>
</dbReference>
<dbReference type="RefSeq" id="WP_012073183.1">
    <property type="nucleotide sequence ID" value="NC_009655.1"/>
</dbReference>
<dbReference type="SMR" id="A6VPA9"/>
<dbReference type="STRING" id="339671.Asuc_1447"/>
<dbReference type="KEGG" id="asu:Asuc_1447"/>
<dbReference type="eggNOG" id="COG0292">
    <property type="taxonomic scope" value="Bacteria"/>
</dbReference>
<dbReference type="HOGENOM" id="CLU_123265_0_1_6"/>
<dbReference type="OrthoDB" id="9808966at2"/>
<dbReference type="Proteomes" id="UP000001114">
    <property type="component" value="Chromosome"/>
</dbReference>
<dbReference type="GO" id="GO:1990904">
    <property type="term" value="C:ribonucleoprotein complex"/>
    <property type="evidence" value="ECO:0007669"/>
    <property type="project" value="UniProtKB-KW"/>
</dbReference>
<dbReference type="GO" id="GO:0005840">
    <property type="term" value="C:ribosome"/>
    <property type="evidence" value="ECO:0007669"/>
    <property type="project" value="UniProtKB-KW"/>
</dbReference>
<dbReference type="GO" id="GO:0019843">
    <property type="term" value="F:rRNA binding"/>
    <property type="evidence" value="ECO:0007669"/>
    <property type="project" value="UniProtKB-UniRule"/>
</dbReference>
<dbReference type="GO" id="GO:0003735">
    <property type="term" value="F:structural constituent of ribosome"/>
    <property type="evidence" value="ECO:0007669"/>
    <property type="project" value="InterPro"/>
</dbReference>
<dbReference type="GO" id="GO:0000027">
    <property type="term" value="P:ribosomal large subunit assembly"/>
    <property type="evidence" value="ECO:0007669"/>
    <property type="project" value="UniProtKB-UniRule"/>
</dbReference>
<dbReference type="GO" id="GO:0006412">
    <property type="term" value="P:translation"/>
    <property type="evidence" value="ECO:0007669"/>
    <property type="project" value="InterPro"/>
</dbReference>
<dbReference type="CDD" id="cd07026">
    <property type="entry name" value="Ribosomal_L20"/>
    <property type="match status" value="1"/>
</dbReference>
<dbReference type="FunFam" id="1.10.1900.20:FF:000001">
    <property type="entry name" value="50S ribosomal protein L20"/>
    <property type="match status" value="1"/>
</dbReference>
<dbReference type="Gene3D" id="6.10.160.10">
    <property type="match status" value="1"/>
</dbReference>
<dbReference type="Gene3D" id="1.10.1900.20">
    <property type="entry name" value="Ribosomal protein L20"/>
    <property type="match status" value="1"/>
</dbReference>
<dbReference type="HAMAP" id="MF_00382">
    <property type="entry name" value="Ribosomal_bL20"/>
    <property type="match status" value="1"/>
</dbReference>
<dbReference type="InterPro" id="IPR005813">
    <property type="entry name" value="Ribosomal_bL20"/>
</dbReference>
<dbReference type="InterPro" id="IPR049946">
    <property type="entry name" value="RIBOSOMAL_L20_CS"/>
</dbReference>
<dbReference type="InterPro" id="IPR035566">
    <property type="entry name" value="Ribosomal_protein_bL20_C"/>
</dbReference>
<dbReference type="NCBIfam" id="TIGR01032">
    <property type="entry name" value="rplT_bact"/>
    <property type="match status" value="1"/>
</dbReference>
<dbReference type="PANTHER" id="PTHR10986">
    <property type="entry name" value="39S RIBOSOMAL PROTEIN L20"/>
    <property type="match status" value="1"/>
</dbReference>
<dbReference type="Pfam" id="PF00453">
    <property type="entry name" value="Ribosomal_L20"/>
    <property type="match status" value="1"/>
</dbReference>
<dbReference type="PRINTS" id="PR00062">
    <property type="entry name" value="RIBOSOMALL20"/>
</dbReference>
<dbReference type="SUPFAM" id="SSF74731">
    <property type="entry name" value="Ribosomal protein L20"/>
    <property type="match status" value="1"/>
</dbReference>
<dbReference type="PROSITE" id="PS00937">
    <property type="entry name" value="RIBOSOMAL_L20"/>
    <property type="match status" value="1"/>
</dbReference>
<name>RL20_ACTSZ</name>
<organism>
    <name type="scientific">Actinobacillus succinogenes (strain ATCC 55618 / DSM 22257 / CCUG 43843 / 130Z)</name>
    <dbReference type="NCBI Taxonomy" id="339671"/>
    <lineage>
        <taxon>Bacteria</taxon>
        <taxon>Pseudomonadati</taxon>
        <taxon>Pseudomonadota</taxon>
        <taxon>Gammaproteobacteria</taxon>
        <taxon>Pasteurellales</taxon>
        <taxon>Pasteurellaceae</taxon>
        <taxon>Actinobacillus</taxon>
    </lineage>
</organism>
<keyword id="KW-1185">Reference proteome</keyword>
<keyword id="KW-0687">Ribonucleoprotein</keyword>
<keyword id="KW-0689">Ribosomal protein</keyword>
<keyword id="KW-0694">RNA-binding</keyword>
<keyword id="KW-0699">rRNA-binding</keyword>
<gene>
    <name evidence="1" type="primary">rplT</name>
    <name type="ordered locus">Asuc_1447</name>
</gene>
<feature type="chain" id="PRO_1000072179" description="Large ribosomal subunit protein bL20">
    <location>
        <begin position="1"/>
        <end position="117"/>
    </location>
</feature>
<sequence>MARVKRGVIARARHKKVLKAAKGYYGARSRVYRVAFQAVIKAGQYAYRDRRQRKRQFRQLWIARINAAARQNSLSYSKFINGLKKASVEIDRKILADIAVFDKVAFTALVEKAKSVL</sequence>
<proteinExistence type="inferred from homology"/>
<comment type="function">
    <text evidence="1">Binds directly to 23S ribosomal RNA and is necessary for the in vitro assembly process of the 50S ribosomal subunit. It is not involved in the protein synthesizing functions of that subunit.</text>
</comment>
<comment type="similarity">
    <text evidence="1">Belongs to the bacterial ribosomal protein bL20 family.</text>
</comment>
<reference key="1">
    <citation type="journal article" date="2010" name="BMC Genomics">
        <title>A genomic perspective on the potential of Actinobacillus succinogenes for industrial succinate production.</title>
        <authorList>
            <person name="McKinlay J.B."/>
            <person name="Laivenieks M."/>
            <person name="Schindler B.D."/>
            <person name="McKinlay A.A."/>
            <person name="Siddaramappa S."/>
            <person name="Challacombe J.F."/>
            <person name="Lowry S.R."/>
            <person name="Clum A."/>
            <person name="Lapidus A.L."/>
            <person name="Burkhart K.B."/>
            <person name="Harkins V."/>
            <person name="Vieille C."/>
        </authorList>
    </citation>
    <scope>NUCLEOTIDE SEQUENCE [LARGE SCALE GENOMIC DNA]</scope>
    <source>
        <strain>ATCC 55618 / DSM 22257 / CCUG 43843 / 130Z</strain>
    </source>
</reference>